<dbReference type="EMBL" id="CP000133">
    <property type="protein sequence ID" value="ABC92707.1"/>
    <property type="molecule type" value="Genomic_DNA"/>
</dbReference>
<dbReference type="RefSeq" id="WP_011427153.1">
    <property type="nucleotide sequence ID" value="NC_007761.1"/>
</dbReference>
<dbReference type="SMR" id="Q2K379"/>
<dbReference type="KEGG" id="ret:RHE_CH03962"/>
<dbReference type="eggNOG" id="COG0335">
    <property type="taxonomic scope" value="Bacteria"/>
</dbReference>
<dbReference type="HOGENOM" id="CLU_103507_0_2_5"/>
<dbReference type="OrthoDB" id="9803541at2"/>
<dbReference type="Proteomes" id="UP000001936">
    <property type="component" value="Chromosome"/>
</dbReference>
<dbReference type="GO" id="GO:0022625">
    <property type="term" value="C:cytosolic large ribosomal subunit"/>
    <property type="evidence" value="ECO:0007669"/>
    <property type="project" value="TreeGrafter"/>
</dbReference>
<dbReference type="GO" id="GO:0003735">
    <property type="term" value="F:structural constituent of ribosome"/>
    <property type="evidence" value="ECO:0007669"/>
    <property type="project" value="InterPro"/>
</dbReference>
<dbReference type="GO" id="GO:0006412">
    <property type="term" value="P:translation"/>
    <property type="evidence" value="ECO:0007669"/>
    <property type="project" value="UniProtKB-UniRule"/>
</dbReference>
<dbReference type="FunFam" id="2.30.30.790:FF:000001">
    <property type="entry name" value="50S ribosomal protein L19"/>
    <property type="match status" value="1"/>
</dbReference>
<dbReference type="Gene3D" id="2.30.30.790">
    <property type="match status" value="1"/>
</dbReference>
<dbReference type="HAMAP" id="MF_00402">
    <property type="entry name" value="Ribosomal_bL19"/>
    <property type="match status" value="1"/>
</dbReference>
<dbReference type="InterPro" id="IPR001857">
    <property type="entry name" value="Ribosomal_bL19"/>
</dbReference>
<dbReference type="InterPro" id="IPR018257">
    <property type="entry name" value="Ribosomal_bL19_CS"/>
</dbReference>
<dbReference type="InterPro" id="IPR038657">
    <property type="entry name" value="Ribosomal_bL19_sf"/>
</dbReference>
<dbReference type="InterPro" id="IPR008991">
    <property type="entry name" value="Translation_prot_SH3-like_sf"/>
</dbReference>
<dbReference type="NCBIfam" id="TIGR01024">
    <property type="entry name" value="rplS_bact"/>
    <property type="match status" value="1"/>
</dbReference>
<dbReference type="PANTHER" id="PTHR15680:SF9">
    <property type="entry name" value="LARGE RIBOSOMAL SUBUNIT PROTEIN BL19M"/>
    <property type="match status" value="1"/>
</dbReference>
<dbReference type="PANTHER" id="PTHR15680">
    <property type="entry name" value="RIBOSOMAL PROTEIN L19"/>
    <property type="match status" value="1"/>
</dbReference>
<dbReference type="Pfam" id="PF01245">
    <property type="entry name" value="Ribosomal_L19"/>
    <property type="match status" value="1"/>
</dbReference>
<dbReference type="PRINTS" id="PR00061">
    <property type="entry name" value="RIBOSOMALL19"/>
</dbReference>
<dbReference type="SUPFAM" id="SSF50104">
    <property type="entry name" value="Translation proteins SH3-like domain"/>
    <property type="match status" value="1"/>
</dbReference>
<dbReference type="PROSITE" id="PS01015">
    <property type="entry name" value="RIBOSOMAL_L19"/>
    <property type="match status" value="1"/>
</dbReference>
<evidence type="ECO:0000255" key="1">
    <source>
        <dbReference type="HAMAP-Rule" id="MF_00402"/>
    </source>
</evidence>
<evidence type="ECO:0000305" key="2"/>
<sequence length="178" mass="19246">MNIIQQLEAEQAAKIEAKRTLPEFSPGDTVRVNVKVTEGNRTRVQAYEGVCIARSGGGLQENFTVRKISYGEGVERVFPVYSPMIESVDVVRRGKVRRAKLYYLRDRRGKSARIVEDTGVRARKLNDAERAAVAEEKARIDAEKVAAAQALAAEKAAAEAAEAKAAAEAAAAAETAAE</sequence>
<keyword id="KW-1185">Reference proteome</keyword>
<keyword id="KW-0687">Ribonucleoprotein</keyword>
<keyword id="KW-0689">Ribosomal protein</keyword>
<proteinExistence type="inferred from homology"/>
<comment type="function">
    <text evidence="1">This protein is located at the 30S-50S ribosomal subunit interface and may play a role in the structure and function of the aminoacyl-tRNA binding site.</text>
</comment>
<comment type="similarity">
    <text evidence="1">Belongs to the bacterial ribosomal protein bL19 family.</text>
</comment>
<feature type="chain" id="PRO_0000252531" description="Large ribosomal subunit protein bL19">
    <location>
        <begin position="1"/>
        <end position="178"/>
    </location>
</feature>
<reference key="1">
    <citation type="journal article" date="2006" name="Proc. Natl. Acad. Sci. U.S.A.">
        <title>The partitioned Rhizobium etli genome: genetic and metabolic redundancy in seven interacting replicons.</title>
        <authorList>
            <person name="Gonzalez V."/>
            <person name="Santamaria R.I."/>
            <person name="Bustos P."/>
            <person name="Hernandez-Gonzalez I."/>
            <person name="Medrano-Soto A."/>
            <person name="Moreno-Hagelsieb G."/>
            <person name="Janga S.C."/>
            <person name="Ramirez M.A."/>
            <person name="Jimenez-Jacinto V."/>
            <person name="Collado-Vides J."/>
            <person name="Davila G."/>
        </authorList>
    </citation>
    <scope>NUCLEOTIDE SEQUENCE [LARGE SCALE GENOMIC DNA]</scope>
    <source>
        <strain>ATCC 51251 / DSM 11541 / JCM 21823 / NBRC 15573 / CFN 42</strain>
    </source>
</reference>
<accession>Q2K379</accession>
<name>RL19_RHIEC</name>
<protein>
    <recommendedName>
        <fullName evidence="1">Large ribosomal subunit protein bL19</fullName>
    </recommendedName>
    <alternativeName>
        <fullName evidence="2">50S ribosomal protein L19</fullName>
    </alternativeName>
</protein>
<gene>
    <name evidence="1" type="primary">rplS</name>
    <name type="ordered locus">RHE_CH03962</name>
</gene>
<organism>
    <name type="scientific">Rhizobium etli (strain ATCC 51251 / DSM 11541 / JCM 21823 / NBRC 15573 / CFN 42)</name>
    <dbReference type="NCBI Taxonomy" id="347834"/>
    <lineage>
        <taxon>Bacteria</taxon>
        <taxon>Pseudomonadati</taxon>
        <taxon>Pseudomonadota</taxon>
        <taxon>Alphaproteobacteria</taxon>
        <taxon>Hyphomicrobiales</taxon>
        <taxon>Rhizobiaceae</taxon>
        <taxon>Rhizobium/Agrobacterium group</taxon>
        <taxon>Rhizobium</taxon>
    </lineage>
</organism>